<keyword id="KW-0012">Acyltransferase</keyword>
<keyword id="KW-0441">Lipid A biosynthesis</keyword>
<keyword id="KW-0444">Lipid biosynthesis</keyword>
<keyword id="KW-0443">Lipid metabolism</keyword>
<keyword id="KW-0677">Repeat</keyword>
<keyword id="KW-0808">Transferase</keyword>
<proteinExistence type="inferred from homology"/>
<name>LPXD1_LEGPA</name>
<gene>
    <name evidence="1" type="primary">lpxD1</name>
    <name type="ordered locus">lpp0114</name>
</gene>
<comment type="function">
    <text evidence="1">Catalyzes the N-acylation of UDP-3-O-acylglucosamine using 3-hydroxyacyl-ACP as the acyl donor. Is involved in the biosynthesis of lipid A, a phosphorylated glycolipid that anchors the lipopolysaccharide to the outer membrane of the cell.</text>
</comment>
<comment type="catalytic activity">
    <reaction evidence="1">
        <text>a UDP-3-O-[(3R)-3-hydroxyacyl]-alpha-D-glucosamine + a (3R)-hydroxyacyl-[ACP] = a UDP-2-N,3-O-bis[(3R)-3-hydroxyacyl]-alpha-D-glucosamine + holo-[ACP] + H(+)</text>
        <dbReference type="Rhea" id="RHEA:53836"/>
        <dbReference type="Rhea" id="RHEA-COMP:9685"/>
        <dbReference type="Rhea" id="RHEA-COMP:9945"/>
        <dbReference type="ChEBI" id="CHEBI:15378"/>
        <dbReference type="ChEBI" id="CHEBI:64479"/>
        <dbReference type="ChEBI" id="CHEBI:78827"/>
        <dbReference type="ChEBI" id="CHEBI:137740"/>
        <dbReference type="ChEBI" id="CHEBI:137748"/>
        <dbReference type="EC" id="2.3.1.191"/>
    </reaction>
</comment>
<comment type="pathway">
    <text evidence="1">Bacterial outer membrane biogenesis; LPS lipid A biosynthesis.</text>
</comment>
<comment type="subunit">
    <text evidence="1">Homotrimer.</text>
</comment>
<comment type="similarity">
    <text evidence="1">Belongs to the transferase hexapeptide repeat family. LpxD subfamily.</text>
</comment>
<reference key="1">
    <citation type="journal article" date="2004" name="Nat. Genet.">
        <title>Evidence in the Legionella pneumophila genome for exploitation of host cell functions and high genome plasticity.</title>
        <authorList>
            <person name="Cazalet C."/>
            <person name="Rusniok C."/>
            <person name="Brueggemann H."/>
            <person name="Zidane N."/>
            <person name="Magnier A."/>
            <person name="Ma L."/>
            <person name="Tichit M."/>
            <person name="Jarraud S."/>
            <person name="Bouchier C."/>
            <person name="Vandenesch F."/>
            <person name="Kunst F."/>
            <person name="Etienne J."/>
            <person name="Glaser P."/>
            <person name="Buchrieser C."/>
        </authorList>
    </citation>
    <scope>NUCLEOTIDE SEQUENCE [LARGE SCALE GENOMIC DNA]</scope>
    <source>
        <strain>Paris</strain>
    </source>
</reference>
<evidence type="ECO:0000255" key="1">
    <source>
        <dbReference type="HAMAP-Rule" id="MF_00523"/>
    </source>
</evidence>
<feature type="chain" id="PRO_0000264389" description="UDP-3-O-acylglucosamine N-acyltransferase 1">
    <location>
        <begin position="1"/>
        <end position="351"/>
    </location>
</feature>
<feature type="active site" description="Proton acceptor" evidence="1">
    <location>
        <position position="237"/>
    </location>
</feature>
<dbReference type="EC" id="2.3.1.191" evidence="1"/>
<dbReference type="EMBL" id="CR628336">
    <property type="protein sequence ID" value="CAH11262.1"/>
    <property type="molecule type" value="Genomic_DNA"/>
</dbReference>
<dbReference type="SMR" id="Q5X8X9"/>
<dbReference type="KEGG" id="lpp:lpp0114"/>
<dbReference type="LegioList" id="lpp0114"/>
<dbReference type="HOGENOM" id="CLU_049865_0_0_6"/>
<dbReference type="UniPathway" id="UPA00973"/>
<dbReference type="GO" id="GO:0016020">
    <property type="term" value="C:membrane"/>
    <property type="evidence" value="ECO:0007669"/>
    <property type="project" value="GOC"/>
</dbReference>
<dbReference type="GO" id="GO:0016410">
    <property type="term" value="F:N-acyltransferase activity"/>
    <property type="evidence" value="ECO:0007669"/>
    <property type="project" value="InterPro"/>
</dbReference>
<dbReference type="GO" id="GO:0009245">
    <property type="term" value="P:lipid A biosynthetic process"/>
    <property type="evidence" value="ECO:0007669"/>
    <property type="project" value="UniProtKB-UniRule"/>
</dbReference>
<dbReference type="CDD" id="cd03352">
    <property type="entry name" value="LbH_LpxD"/>
    <property type="match status" value="1"/>
</dbReference>
<dbReference type="Gene3D" id="2.160.10.10">
    <property type="entry name" value="Hexapeptide repeat proteins"/>
    <property type="match status" value="1"/>
</dbReference>
<dbReference type="Gene3D" id="3.40.1390.10">
    <property type="entry name" value="MurE/MurF, N-terminal domain"/>
    <property type="match status" value="1"/>
</dbReference>
<dbReference type="HAMAP" id="MF_00523">
    <property type="entry name" value="LpxD"/>
    <property type="match status" value="1"/>
</dbReference>
<dbReference type="InterPro" id="IPR001451">
    <property type="entry name" value="Hexapep"/>
</dbReference>
<dbReference type="InterPro" id="IPR018357">
    <property type="entry name" value="Hexapep_transf_CS"/>
</dbReference>
<dbReference type="InterPro" id="IPR007691">
    <property type="entry name" value="LpxD"/>
</dbReference>
<dbReference type="InterPro" id="IPR011004">
    <property type="entry name" value="Trimer_LpxA-like_sf"/>
</dbReference>
<dbReference type="InterPro" id="IPR020573">
    <property type="entry name" value="UDP_GlcNAc_AcTrfase_non-rep"/>
</dbReference>
<dbReference type="NCBIfam" id="TIGR01853">
    <property type="entry name" value="lipid_A_lpxD"/>
    <property type="match status" value="1"/>
</dbReference>
<dbReference type="NCBIfam" id="NF002060">
    <property type="entry name" value="PRK00892.1"/>
    <property type="match status" value="1"/>
</dbReference>
<dbReference type="PANTHER" id="PTHR43378">
    <property type="entry name" value="UDP-3-O-ACYLGLUCOSAMINE N-ACYLTRANSFERASE"/>
    <property type="match status" value="1"/>
</dbReference>
<dbReference type="PANTHER" id="PTHR43378:SF2">
    <property type="entry name" value="UDP-3-O-ACYLGLUCOSAMINE N-ACYLTRANSFERASE 1, MITOCHONDRIAL-RELATED"/>
    <property type="match status" value="1"/>
</dbReference>
<dbReference type="Pfam" id="PF00132">
    <property type="entry name" value="Hexapep"/>
    <property type="match status" value="3"/>
</dbReference>
<dbReference type="Pfam" id="PF04613">
    <property type="entry name" value="LpxD"/>
    <property type="match status" value="1"/>
</dbReference>
<dbReference type="SUPFAM" id="SSF51161">
    <property type="entry name" value="Trimeric LpxA-like enzymes"/>
    <property type="match status" value="1"/>
</dbReference>
<dbReference type="PROSITE" id="PS00101">
    <property type="entry name" value="HEXAPEP_TRANSFERASES"/>
    <property type="match status" value="2"/>
</dbReference>
<organism>
    <name type="scientific">Legionella pneumophila (strain Paris)</name>
    <dbReference type="NCBI Taxonomy" id="297246"/>
    <lineage>
        <taxon>Bacteria</taxon>
        <taxon>Pseudomonadati</taxon>
        <taxon>Pseudomonadota</taxon>
        <taxon>Gammaproteobacteria</taxon>
        <taxon>Legionellales</taxon>
        <taxon>Legionellaceae</taxon>
        <taxon>Legionella</taxon>
    </lineage>
</organism>
<accession>Q5X8X9</accession>
<sequence>MNSSLRDIANLVQGMVIGNDAITVSTLSPIDNILPGSLVFAEGEDNIKLAENSEAAAILIGQGTIDSPKPLIQVKNPFKAFIALLNHFYPPRRISPGVHPTAVIGAEVQLGDEVYVGPFVVIESGSIIGNHSVLKSHIHIGHNVVIGDHTTIHPQVTIYDNCRIGSNVTIHASTVIGSDGFGYTFVDGQHLKVPHSGYVVIENNVEIGANTAIDKATLGATVIGEGTKIDNLVQIAHSVKLGKHNIICAFTGIAGSTTTGNNVIFAANVGVSDHVHIEDEVILGARTGVPPHKHLKKGTVYLGNPAKPKDVAIKHELSVNRIPLIRKNIKSLTEQVAVINKKLDIKAKEVE</sequence>
<protein>
    <recommendedName>
        <fullName evidence="1">UDP-3-O-acylglucosamine N-acyltransferase 1</fullName>
        <ecNumber evidence="1">2.3.1.191</ecNumber>
    </recommendedName>
</protein>